<dbReference type="EMBL" id="DQ218272">
    <property type="protein sequence ID" value="ABA86561.1"/>
    <property type="molecule type" value="mRNA"/>
</dbReference>
<dbReference type="SMR" id="Q38L02"/>
<dbReference type="GO" id="GO:0005576">
    <property type="term" value="C:extracellular region"/>
    <property type="evidence" value="ECO:0007669"/>
    <property type="project" value="UniProtKB-SubCell"/>
</dbReference>
<dbReference type="GO" id="GO:0090729">
    <property type="term" value="F:toxin activity"/>
    <property type="evidence" value="ECO:0007669"/>
    <property type="project" value="UniProtKB-KW"/>
</dbReference>
<dbReference type="FunFam" id="3.10.100.10:FF:000087">
    <property type="entry name" value="Snaclec rhodocetin subunit delta"/>
    <property type="match status" value="1"/>
</dbReference>
<dbReference type="Gene3D" id="3.10.100.10">
    <property type="entry name" value="Mannose-Binding Protein A, subunit A"/>
    <property type="match status" value="1"/>
</dbReference>
<dbReference type="InterPro" id="IPR001304">
    <property type="entry name" value="C-type_lectin-like"/>
</dbReference>
<dbReference type="InterPro" id="IPR016186">
    <property type="entry name" value="C-type_lectin-like/link_sf"/>
</dbReference>
<dbReference type="InterPro" id="IPR050111">
    <property type="entry name" value="C-type_lectin/snaclec_domain"/>
</dbReference>
<dbReference type="InterPro" id="IPR016187">
    <property type="entry name" value="CTDL_fold"/>
</dbReference>
<dbReference type="PANTHER" id="PTHR22803">
    <property type="entry name" value="MANNOSE, PHOSPHOLIPASE, LECTIN RECEPTOR RELATED"/>
    <property type="match status" value="1"/>
</dbReference>
<dbReference type="Pfam" id="PF00059">
    <property type="entry name" value="Lectin_C"/>
    <property type="match status" value="1"/>
</dbReference>
<dbReference type="PRINTS" id="PR01504">
    <property type="entry name" value="PNCREATITSAP"/>
</dbReference>
<dbReference type="SMART" id="SM00034">
    <property type="entry name" value="CLECT"/>
    <property type="match status" value="1"/>
</dbReference>
<dbReference type="SUPFAM" id="SSF56436">
    <property type="entry name" value="C-type lectin-like"/>
    <property type="match status" value="1"/>
</dbReference>
<dbReference type="PROSITE" id="PS50041">
    <property type="entry name" value="C_TYPE_LECTIN_2"/>
    <property type="match status" value="1"/>
</dbReference>
<evidence type="ECO:0000255" key="1">
    <source>
        <dbReference type="PROSITE-ProRule" id="PRU00040"/>
    </source>
</evidence>
<evidence type="ECO:0000269" key="2">
    <source>
    </source>
</evidence>
<evidence type="ECO:0000305" key="3"/>
<comment type="function">
    <text>Inhibits ristocetin-induced platelet aggregation via binding to platelet glycoprotein Ibalpha (GP1BA).</text>
</comment>
<comment type="subunit">
    <text>Heterodimer of subunits alpha and beta; disulfide-linked.</text>
</comment>
<comment type="subcellular location">
    <subcellularLocation>
        <location>Secreted</location>
    </subcellularLocation>
</comment>
<comment type="tissue specificity">
    <text>Expressed by the venom gland.</text>
</comment>
<comment type="similarity">
    <text evidence="3">Belongs to the snaclec family.</text>
</comment>
<sequence length="154" mass="17507">MGRFISVSFGLLVVFLSLSGTGADCPSEWSSHEGHCYKVFKLLKTWEDAEKFCTQQANGWHLASIESVEEANFVAQLASETLTKSKYHAWIGLRDQSKRQQCSSHWTDGSAVSYETVTKYTKCFGLNKETKYHEWITLPCGDKNPFICKSWVLH</sequence>
<feature type="signal peptide" evidence="2">
    <location>
        <begin position="1"/>
        <end position="23"/>
    </location>
</feature>
<feature type="chain" id="PRO_0000355264" description="Snaclec dabocetin subunit alpha">
    <location>
        <begin position="24"/>
        <end position="154"/>
    </location>
</feature>
<feature type="domain" description="C-type lectin" evidence="1">
    <location>
        <begin position="32"/>
        <end position="149"/>
    </location>
</feature>
<feature type="disulfide bond" evidence="1">
    <location>
        <begin position="25"/>
        <end position="36"/>
    </location>
</feature>
<feature type="disulfide bond" evidence="1">
    <location>
        <begin position="53"/>
        <end position="148"/>
    </location>
</feature>
<feature type="disulfide bond" description="Interchain (with C-100 in subunit beta)" evidence="1">
    <location>
        <position position="102"/>
    </location>
</feature>
<feature type="disulfide bond" evidence="1">
    <location>
        <begin position="123"/>
        <end position="140"/>
    </location>
</feature>
<accession>Q38L02</accession>
<reference key="1">
    <citation type="journal article" date="2006" name="Toxicon">
        <title>Characterization and molecular cloning of dabocetin, a potent antiplatelet C-type lectin-like protein from Daboia russellii siamensis venom.</title>
        <authorList>
            <person name="Zhong S.-R."/>
            <person name="Jin Y."/>
            <person name="Wu J.-B."/>
            <person name="Chen R.-Q."/>
            <person name="Jia Y.-H."/>
            <person name="Wang W.-Y."/>
            <person name="Xiong Y.-L."/>
            <person name="Zhang Y."/>
        </authorList>
    </citation>
    <scope>NUCLEOTIDE SEQUENCE [MRNA]</scope>
    <scope>PROTEIN SEQUENCE OF 24-38; 45-51; 85-94; 100-119 AND 132-143</scope>
    <scope>IDENTIFICATION BY MASS SPECTROMETRY</scope>
    <source>
        <tissue>Venom</tissue>
        <tissue>Venom gland</tissue>
    </source>
</reference>
<protein>
    <recommendedName>
        <fullName>Snaclec dabocetin subunit alpha</fullName>
    </recommendedName>
    <alternativeName>
        <fullName>C-type lectin-like 8</fullName>
    </alternativeName>
</protein>
<proteinExistence type="evidence at protein level"/>
<keyword id="KW-0903">Direct protein sequencing</keyword>
<keyword id="KW-1015">Disulfide bond</keyword>
<keyword id="KW-1199">Hemostasis impairing toxin</keyword>
<keyword id="KW-1201">Platelet aggregation inhibiting toxin</keyword>
<keyword id="KW-0964">Secreted</keyword>
<keyword id="KW-0732">Signal</keyword>
<keyword id="KW-0800">Toxin</keyword>
<organism>
    <name type="scientific">Daboia siamensis</name>
    <name type="common">Eastern Russel's viper</name>
    <name type="synonym">Daboia russelii siamensis</name>
    <dbReference type="NCBI Taxonomy" id="343250"/>
    <lineage>
        <taxon>Eukaryota</taxon>
        <taxon>Metazoa</taxon>
        <taxon>Chordata</taxon>
        <taxon>Craniata</taxon>
        <taxon>Vertebrata</taxon>
        <taxon>Euteleostomi</taxon>
        <taxon>Lepidosauria</taxon>
        <taxon>Squamata</taxon>
        <taxon>Bifurcata</taxon>
        <taxon>Unidentata</taxon>
        <taxon>Episquamata</taxon>
        <taxon>Toxicofera</taxon>
        <taxon>Serpentes</taxon>
        <taxon>Colubroidea</taxon>
        <taxon>Viperidae</taxon>
        <taxon>Viperinae</taxon>
        <taxon>Daboia</taxon>
    </lineage>
</organism>
<name>SLA_DABSI</name>